<organism>
    <name type="scientific">Paenarthrobacter aurescens (strain TC1)</name>
    <dbReference type="NCBI Taxonomy" id="290340"/>
    <lineage>
        <taxon>Bacteria</taxon>
        <taxon>Bacillati</taxon>
        <taxon>Actinomycetota</taxon>
        <taxon>Actinomycetes</taxon>
        <taxon>Micrococcales</taxon>
        <taxon>Micrococcaceae</taxon>
        <taxon>Paenarthrobacter</taxon>
    </lineage>
</organism>
<dbReference type="EMBL" id="CP000474">
    <property type="protein sequence ID" value="ABM06941.1"/>
    <property type="molecule type" value="Genomic_DNA"/>
</dbReference>
<dbReference type="RefSeq" id="WP_011773417.1">
    <property type="nucleotide sequence ID" value="NC_008711.1"/>
</dbReference>
<dbReference type="SMR" id="A1R2K7"/>
<dbReference type="STRING" id="290340.AAur_0665"/>
<dbReference type="KEGG" id="aau:AAur_0665"/>
<dbReference type="eggNOG" id="COG0353">
    <property type="taxonomic scope" value="Bacteria"/>
</dbReference>
<dbReference type="HOGENOM" id="CLU_060739_1_0_11"/>
<dbReference type="OrthoDB" id="9802672at2"/>
<dbReference type="Proteomes" id="UP000000637">
    <property type="component" value="Chromosome"/>
</dbReference>
<dbReference type="GO" id="GO:0003677">
    <property type="term" value="F:DNA binding"/>
    <property type="evidence" value="ECO:0007669"/>
    <property type="project" value="UniProtKB-UniRule"/>
</dbReference>
<dbReference type="GO" id="GO:0008270">
    <property type="term" value="F:zinc ion binding"/>
    <property type="evidence" value="ECO:0007669"/>
    <property type="project" value="UniProtKB-KW"/>
</dbReference>
<dbReference type="GO" id="GO:0006310">
    <property type="term" value="P:DNA recombination"/>
    <property type="evidence" value="ECO:0007669"/>
    <property type="project" value="UniProtKB-UniRule"/>
</dbReference>
<dbReference type="GO" id="GO:0006281">
    <property type="term" value="P:DNA repair"/>
    <property type="evidence" value="ECO:0007669"/>
    <property type="project" value="UniProtKB-UniRule"/>
</dbReference>
<dbReference type="CDD" id="cd01025">
    <property type="entry name" value="TOPRIM_recR"/>
    <property type="match status" value="1"/>
</dbReference>
<dbReference type="Gene3D" id="3.30.60.80">
    <property type="match status" value="1"/>
</dbReference>
<dbReference type="Gene3D" id="3.40.1360.10">
    <property type="match status" value="1"/>
</dbReference>
<dbReference type="Gene3D" id="6.10.250.240">
    <property type="match status" value="1"/>
</dbReference>
<dbReference type="Gene3D" id="1.10.8.420">
    <property type="entry name" value="RecR Domain 1"/>
    <property type="match status" value="1"/>
</dbReference>
<dbReference type="HAMAP" id="MF_00017">
    <property type="entry name" value="RecR"/>
    <property type="match status" value="1"/>
</dbReference>
<dbReference type="InterPro" id="IPR000093">
    <property type="entry name" value="DNA_Rcmb_RecR"/>
</dbReference>
<dbReference type="InterPro" id="IPR023627">
    <property type="entry name" value="Rcmb_RecR"/>
</dbReference>
<dbReference type="InterPro" id="IPR015967">
    <property type="entry name" value="Rcmb_RecR_Znf"/>
</dbReference>
<dbReference type="InterPro" id="IPR006171">
    <property type="entry name" value="TOPRIM_dom"/>
</dbReference>
<dbReference type="InterPro" id="IPR034137">
    <property type="entry name" value="TOPRIM_RecR"/>
</dbReference>
<dbReference type="NCBIfam" id="TIGR00615">
    <property type="entry name" value="recR"/>
    <property type="match status" value="1"/>
</dbReference>
<dbReference type="PANTHER" id="PTHR30446">
    <property type="entry name" value="RECOMBINATION PROTEIN RECR"/>
    <property type="match status" value="1"/>
</dbReference>
<dbReference type="PANTHER" id="PTHR30446:SF0">
    <property type="entry name" value="RECOMBINATION PROTEIN RECR"/>
    <property type="match status" value="1"/>
</dbReference>
<dbReference type="Pfam" id="PF21175">
    <property type="entry name" value="RecR_C"/>
    <property type="match status" value="1"/>
</dbReference>
<dbReference type="Pfam" id="PF21176">
    <property type="entry name" value="RecR_HhH"/>
    <property type="match status" value="1"/>
</dbReference>
<dbReference type="Pfam" id="PF02132">
    <property type="entry name" value="RecR_ZnF"/>
    <property type="match status" value="1"/>
</dbReference>
<dbReference type="Pfam" id="PF13662">
    <property type="entry name" value="Toprim_4"/>
    <property type="match status" value="1"/>
</dbReference>
<dbReference type="SMART" id="SM00493">
    <property type="entry name" value="TOPRIM"/>
    <property type="match status" value="1"/>
</dbReference>
<dbReference type="SUPFAM" id="SSF111304">
    <property type="entry name" value="Recombination protein RecR"/>
    <property type="match status" value="1"/>
</dbReference>
<dbReference type="PROSITE" id="PS01300">
    <property type="entry name" value="RECR"/>
    <property type="match status" value="1"/>
</dbReference>
<dbReference type="PROSITE" id="PS50880">
    <property type="entry name" value="TOPRIM"/>
    <property type="match status" value="1"/>
</dbReference>
<comment type="function">
    <text evidence="1">May play a role in DNA repair. It seems to be involved in an RecBC-independent recombinational process of DNA repair. It may act with RecF and RecO.</text>
</comment>
<comment type="similarity">
    <text evidence="1">Belongs to the RecR family.</text>
</comment>
<name>RECR_PAEAT</name>
<keyword id="KW-0227">DNA damage</keyword>
<keyword id="KW-0233">DNA recombination</keyword>
<keyword id="KW-0234">DNA repair</keyword>
<keyword id="KW-0479">Metal-binding</keyword>
<keyword id="KW-0862">Zinc</keyword>
<keyword id="KW-0863">Zinc-finger</keyword>
<gene>
    <name evidence="1" type="primary">recR</name>
    <name type="ordered locus">AAur_0665</name>
</gene>
<proteinExistence type="inferred from homology"/>
<reference key="1">
    <citation type="journal article" date="2006" name="PLoS Genet.">
        <title>Secrets of soil survival revealed by the genome sequence of Arthrobacter aurescens TC1.</title>
        <authorList>
            <person name="Mongodin E.F."/>
            <person name="Shapir N."/>
            <person name="Daugherty S.C."/>
            <person name="DeBoy R.T."/>
            <person name="Emerson J.B."/>
            <person name="Shvartzbeyn A."/>
            <person name="Radune D."/>
            <person name="Vamathevan J."/>
            <person name="Riggs F."/>
            <person name="Grinberg V."/>
            <person name="Khouri H.M."/>
            <person name="Wackett L.P."/>
            <person name="Nelson K.E."/>
            <person name="Sadowsky M.J."/>
        </authorList>
    </citation>
    <scope>NUCLEOTIDE SEQUENCE [LARGE SCALE GENOMIC DNA]</scope>
    <source>
        <strain>TC1</strain>
    </source>
</reference>
<sequence>MYEGAVQELIDELGRLPGVGPKSAQRLAFHILEADPEDMKRLVTAITTVKERVKFCTVCFNVTEQETCNICRDQRRDPSVICVVEESKDVLAVERTRSFRGRYHVLGGAINPIAGIGPEQLRIRELLTRLNDGAIQEIIIATDPNLEGEATATYLARMLKSIGITVTRLASGLPVGGDLEYADEVTLGRAFEGRRNALL</sequence>
<evidence type="ECO:0000255" key="1">
    <source>
        <dbReference type="HAMAP-Rule" id="MF_00017"/>
    </source>
</evidence>
<protein>
    <recommendedName>
        <fullName evidence="1">Recombination protein RecR</fullName>
    </recommendedName>
</protein>
<accession>A1R2K7</accession>
<feature type="chain" id="PRO_0000322860" description="Recombination protein RecR">
    <location>
        <begin position="1"/>
        <end position="199"/>
    </location>
</feature>
<feature type="domain" description="Toprim" evidence="1">
    <location>
        <begin position="79"/>
        <end position="174"/>
    </location>
</feature>
<feature type="zinc finger region" description="C4-type" evidence="1">
    <location>
        <begin position="56"/>
        <end position="71"/>
    </location>
</feature>